<proteinExistence type="inferred from homology"/>
<sequence>MPRKGPVAKRDVLPDPIYNSKLVTRLINKMMVDGKRGKSQAILYSAFDIIAQETGKDPMEVFEQAMKNIMPLLEVKARRVGGANYQVPIEVRADRRSTLGLRWLVNYARLRGEKTMEVRVAREIMDAANNTGASVKKREDTHKMADANRAFAHYRW</sequence>
<gene>
    <name evidence="1" type="primary">rpsG</name>
    <name type="ordered locus">lin2804</name>
</gene>
<feature type="chain" id="PRO_0000124286" description="Small ribosomal subunit protein uS7">
    <location>
        <begin position="1"/>
        <end position="156"/>
    </location>
</feature>
<reference key="1">
    <citation type="journal article" date="2001" name="Science">
        <title>Comparative genomics of Listeria species.</title>
        <authorList>
            <person name="Glaser P."/>
            <person name="Frangeul L."/>
            <person name="Buchrieser C."/>
            <person name="Rusniok C."/>
            <person name="Amend A."/>
            <person name="Baquero F."/>
            <person name="Berche P."/>
            <person name="Bloecker H."/>
            <person name="Brandt P."/>
            <person name="Chakraborty T."/>
            <person name="Charbit A."/>
            <person name="Chetouani F."/>
            <person name="Couve E."/>
            <person name="de Daruvar A."/>
            <person name="Dehoux P."/>
            <person name="Domann E."/>
            <person name="Dominguez-Bernal G."/>
            <person name="Duchaud E."/>
            <person name="Durant L."/>
            <person name="Dussurget O."/>
            <person name="Entian K.-D."/>
            <person name="Fsihi H."/>
            <person name="Garcia-del Portillo F."/>
            <person name="Garrido P."/>
            <person name="Gautier L."/>
            <person name="Goebel W."/>
            <person name="Gomez-Lopez N."/>
            <person name="Hain T."/>
            <person name="Hauf J."/>
            <person name="Jackson D."/>
            <person name="Jones L.-M."/>
            <person name="Kaerst U."/>
            <person name="Kreft J."/>
            <person name="Kuhn M."/>
            <person name="Kunst F."/>
            <person name="Kurapkat G."/>
            <person name="Madueno E."/>
            <person name="Maitournam A."/>
            <person name="Mata Vicente J."/>
            <person name="Ng E."/>
            <person name="Nedjari H."/>
            <person name="Nordsiek G."/>
            <person name="Novella S."/>
            <person name="de Pablos B."/>
            <person name="Perez-Diaz J.-C."/>
            <person name="Purcell R."/>
            <person name="Remmel B."/>
            <person name="Rose M."/>
            <person name="Schlueter T."/>
            <person name="Simoes N."/>
            <person name="Tierrez A."/>
            <person name="Vazquez-Boland J.-A."/>
            <person name="Voss H."/>
            <person name="Wehland J."/>
            <person name="Cossart P."/>
        </authorList>
    </citation>
    <scope>NUCLEOTIDE SEQUENCE [LARGE SCALE GENOMIC DNA]</scope>
    <source>
        <strain>ATCC BAA-680 / CLIP 11262</strain>
    </source>
</reference>
<keyword id="KW-0687">Ribonucleoprotein</keyword>
<keyword id="KW-0689">Ribosomal protein</keyword>
<keyword id="KW-0694">RNA-binding</keyword>
<keyword id="KW-0699">rRNA-binding</keyword>
<keyword id="KW-0820">tRNA-binding</keyword>
<accession>P66612</accession>
<accession>Q927I4</accession>
<organism>
    <name type="scientific">Listeria innocua serovar 6a (strain ATCC BAA-680 / CLIP 11262)</name>
    <dbReference type="NCBI Taxonomy" id="272626"/>
    <lineage>
        <taxon>Bacteria</taxon>
        <taxon>Bacillati</taxon>
        <taxon>Bacillota</taxon>
        <taxon>Bacilli</taxon>
        <taxon>Bacillales</taxon>
        <taxon>Listeriaceae</taxon>
        <taxon>Listeria</taxon>
    </lineage>
</organism>
<evidence type="ECO:0000255" key="1">
    <source>
        <dbReference type="HAMAP-Rule" id="MF_00480"/>
    </source>
</evidence>
<evidence type="ECO:0000305" key="2"/>
<name>RS7_LISIN</name>
<comment type="function">
    <text evidence="1">One of the primary rRNA binding proteins, it binds directly to 16S rRNA where it nucleates assembly of the head domain of the 30S subunit. Is located at the subunit interface close to the decoding center, probably blocks exit of the E-site tRNA.</text>
</comment>
<comment type="subunit">
    <text evidence="1">Part of the 30S ribosomal subunit. Contacts proteins S9 and S11.</text>
</comment>
<comment type="similarity">
    <text evidence="1">Belongs to the universal ribosomal protein uS7 family.</text>
</comment>
<protein>
    <recommendedName>
        <fullName evidence="1">Small ribosomal subunit protein uS7</fullName>
    </recommendedName>
    <alternativeName>
        <fullName evidence="2">30S ribosomal protein S7</fullName>
    </alternativeName>
</protein>
<dbReference type="EMBL" id="AL596173">
    <property type="protein sequence ID" value="CAC98030.1"/>
    <property type="molecule type" value="Genomic_DNA"/>
</dbReference>
<dbReference type="PIR" id="AF1782">
    <property type="entry name" value="AF1782"/>
</dbReference>
<dbReference type="RefSeq" id="WP_003722012.1">
    <property type="nucleotide sequence ID" value="NC_003212.1"/>
</dbReference>
<dbReference type="SMR" id="P66612"/>
<dbReference type="STRING" id="272626.gene:17567191"/>
<dbReference type="GeneID" id="93236077"/>
<dbReference type="KEGG" id="lin:rpsG"/>
<dbReference type="eggNOG" id="COG0049">
    <property type="taxonomic scope" value="Bacteria"/>
</dbReference>
<dbReference type="HOGENOM" id="CLU_072226_1_1_9"/>
<dbReference type="OrthoDB" id="9807653at2"/>
<dbReference type="Proteomes" id="UP000002513">
    <property type="component" value="Chromosome"/>
</dbReference>
<dbReference type="GO" id="GO:0015935">
    <property type="term" value="C:small ribosomal subunit"/>
    <property type="evidence" value="ECO:0007669"/>
    <property type="project" value="InterPro"/>
</dbReference>
<dbReference type="GO" id="GO:0019843">
    <property type="term" value="F:rRNA binding"/>
    <property type="evidence" value="ECO:0007669"/>
    <property type="project" value="UniProtKB-UniRule"/>
</dbReference>
<dbReference type="GO" id="GO:0003735">
    <property type="term" value="F:structural constituent of ribosome"/>
    <property type="evidence" value="ECO:0007669"/>
    <property type="project" value="InterPro"/>
</dbReference>
<dbReference type="GO" id="GO:0000049">
    <property type="term" value="F:tRNA binding"/>
    <property type="evidence" value="ECO:0007669"/>
    <property type="project" value="UniProtKB-UniRule"/>
</dbReference>
<dbReference type="GO" id="GO:0006412">
    <property type="term" value="P:translation"/>
    <property type="evidence" value="ECO:0007669"/>
    <property type="project" value="UniProtKB-UniRule"/>
</dbReference>
<dbReference type="CDD" id="cd14869">
    <property type="entry name" value="uS7_Bacteria"/>
    <property type="match status" value="1"/>
</dbReference>
<dbReference type="FunFam" id="1.10.455.10:FF:000001">
    <property type="entry name" value="30S ribosomal protein S7"/>
    <property type="match status" value="1"/>
</dbReference>
<dbReference type="Gene3D" id="1.10.455.10">
    <property type="entry name" value="Ribosomal protein S7 domain"/>
    <property type="match status" value="1"/>
</dbReference>
<dbReference type="HAMAP" id="MF_00480_B">
    <property type="entry name" value="Ribosomal_uS7_B"/>
    <property type="match status" value="1"/>
</dbReference>
<dbReference type="InterPro" id="IPR000235">
    <property type="entry name" value="Ribosomal_uS7"/>
</dbReference>
<dbReference type="InterPro" id="IPR005717">
    <property type="entry name" value="Ribosomal_uS7_bac/org-type"/>
</dbReference>
<dbReference type="InterPro" id="IPR020606">
    <property type="entry name" value="Ribosomal_uS7_CS"/>
</dbReference>
<dbReference type="InterPro" id="IPR023798">
    <property type="entry name" value="Ribosomal_uS7_dom"/>
</dbReference>
<dbReference type="InterPro" id="IPR036823">
    <property type="entry name" value="Ribosomal_uS7_dom_sf"/>
</dbReference>
<dbReference type="NCBIfam" id="TIGR01029">
    <property type="entry name" value="rpsG_bact"/>
    <property type="match status" value="1"/>
</dbReference>
<dbReference type="PANTHER" id="PTHR11205">
    <property type="entry name" value="RIBOSOMAL PROTEIN S7"/>
    <property type="match status" value="1"/>
</dbReference>
<dbReference type="Pfam" id="PF00177">
    <property type="entry name" value="Ribosomal_S7"/>
    <property type="match status" value="1"/>
</dbReference>
<dbReference type="PIRSF" id="PIRSF002122">
    <property type="entry name" value="RPS7p_RPS7a_RPS5e_RPS7o"/>
    <property type="match status" value="1"/>
</dbReference>
<dbReference type="SUPFAM" id="SSF47973">
    <property type="entry name" value="Ribosomal protein S7"/>
    <property type="match status" value="1"/>
</dbReference>
<dbReference type="PROSITE" id="PS00052">
    <property type="entry name" value="RIBOSOMAL_S7"/>
    <property type="match status" value="1"/>
</dbReference>